<proteinExistence type="inferred from homology"/>
<accession>Q601X8</accession>
<name>DNAJ_MESH2</name>
<reference key="1">
    <citation type="journal article" date="2004" name="J. Bacteriol.">
        <title>The genome sequence of Mycoplasma hyopneumoniae strain 232, the agent of swine mycoplasmosis.</title>
        <authorList>
            <person name="Minion F.C."/>
            <person name="Lefkowitz E.J."/>
            <person name="Madsen M.L."/>
            <person name="Cleary B.J."/>
            <person name="Swartzell S.M."/>
            <person name="Mahairas G.G."/>
        </authorList>
    </citation>
    <scope>NUCLEOTIDE SEQUENCE [LARGE SCALE GENOMIC DNA]</scope>
    <source>
        <strain>232</strain>
    </source>
</reference>
<feature type="chain" id="PRO_0000070825" description="Chaperone protein DnaJ">
    <location>
        <begin position="1"/>
        <end position="368"/>
    </location>
</feature>
<feature type="domain" description="J" evidence="1">
    <location>
        <begin position="5"/>
        <end position="75"/>
    </location>
</feature>
<feature type="repeat" description="CXXCXGXG motif">
    <location>
        <begin position="152"/>
        <end position="159"/>
    </location>
</feature>
<feature type="repeat" description="CXXCXGXG motif">
    <location>
        <begin position="169"/>
        <end position="176"/>
    </location>
</feature>
<feature type="repeat" description="CXXCXGXG motif">
    <location>
        <begin position="196"/>
        <end position="203"/>
    </location>
</feature>
<feature type="repeat" description="CXXCXGXG motif">
    <location>
        <begin position="210"/>
        <end position="217"/>
    </location>
</feature>
<feature type="zinc finger region" description="CR-type" evidence="1">
    <location>
        <begin position="139"/>
        <end position="222"/>
    </location>
</feature>
<feature type="binding site" evidence="1">
    <location>
        <position position="152"/>
    </location>
    <ligand>
        <name>Zn(2+)</name>
        <dbReference type="ChEBI" id="CHEBI:29105"/>
        <label>1</label>
    </ligand>
</feature>
<feature type="binding site" evidence="1">
    <location>
        <position position="155"/>
    </location>
    <ligand>
        <name>Zn(2+)</name>
        <dbReference type="ChEBI" id="CHEBI:29105"/>
        <label>1</label>
    </ligand>
</feature>
<feature type="binding site" evidence="1">
    <location>
        <position position="169"/>
    </location>
    <ligand>
        <name>Zn(2+)</name>
        <dbReference type="ChEBI" id="CHEBI:29105"/>
        <label>2</label>
    </ligand>
</feature>
<feature type="binding site" evidence="1">
    <location>
        <position position="172"/>
    </location>
    <ligand>
        <name>Zn(2+)</name>
        <dbReference type="ChEBI" id="CHEBI:29105"/>
        <label>2</label>
    </ligand>
</feature>
<feature type="binding site" evidence="1">
    <location>
        <position position="196"/>
    </location>
    <ligand>
        <name>Zn(2+)</name>
        <dbReference type="ChEBI" id="CHEBI:29105"/>
        <label>2</label>
    </ligand>
</feature>
<feature type="binding site" evidence="1">
    <location>
        <position position="199"/>
    </location>
    <ligand>
        <name>Zn(2+)</name>
        <dbReference type="ChEBI" id="CHEBI:29105"/>
        <label>2</label>
    </ligand>
</feature>
<feature type="binding site" evidence="1">
    <location>
        <position position="210"/>
    </location>
    <ligand>
        <name>Zn(2+)</name>
        <dbReference type="ChEBI" id="CHEBI:29105"/>
        <label>1</label>
    </ligand>
</feature>
<feature type="binding site" evidence="1">
    <location>
        <position position="213"/>
    </location>
    <ligand>
        <name>Zn(2+)</name>
        <dbReference type="ChEBI" id="CHEBI:29105"/>
        <label>1</label>
    </ligand>
</feature>
<sequence length="368" mass="40871">MAKQDFYKILGVEKSASLTEIKKAYRNLVNIYHPDKNTKKSAEEQKQAEAKFKEIQEAYEILSDETKRKQYDKFGHAAFDQQFGGGSSGFSGFDFGDIFSSFTSGFGFGGSQEQKYSRPLKGENFQAKIYISFIESILGKEISQKLTKYDQCDNCKGSGANSSSDITTCYNCQGRGMQTEVLNIPGFGRVQNKTTCSVCLGSGKNITKNCKKCRGKTIVETKEEVTIKIPAGIQDGMFIRVAGFGGPGHKGGPSGDLHLEINVRQHKHFTRSGNDIHVNMPVSIIDVINQNTVEVPSPTGLKKVRLYDYYKSGQIVNVLRAGAPDPKNPRIIGDLKVHLIFYIPEFSPRQKDDLNQVFAQINDKTKAK</sequence>
<protein>
    <recommendedName>
        <fullName evidence="1">Chaperone protein DnaJ</fullName>
    </recommendedName>
</protein>
<comment type="function">
    <text evidence="1">Participates actively in the response to hyperosmotic and heat shock by preventing the aggregation of stress-denatured proteins and by disaggregating proteins, also in an autonomous, DnaK-independent fashion. Unfolded proteins bind initially to DnaJ; upon interaction with the DnaJ-bound protein, DnaK hydrolyzes its bound ATP, resulting in the formation of a stable complex. GrpE releases ADP from DnaK; ATP binding to DnaK triggers the release of the substrate protein, thus completing the reaction cycle. Several rounds of ATP-dependent interactions between DnaJ, DnaK and GrpE are required for fully efficient folding. Also involved, together with DnaK and GrpE, in the DNA replication of plasmids through activation of initiation proteins.</text>
</comment>
<comment type="cofactor">
    <cofactor evidence="1">
        <name>Zn(2+)</name>
        <dbReference type="ChEBI" id="CHEBI:29105"/>
    </cofactor>
    <text evidence="1">Binds 2 Zn(2+) ions per monomer.</text>
</comment>
<comment type="subunit">
    <text evidence="1">Homodimer.</text>
</comment>
<comment type="subcellular location">
    <subcellularLocation>
        <location evidence="1">Cytoplasm</location>
    </subcellularLocation>
</comment>
<comment type="domain">
    <text evidence="1">The J domain is necessary and sufficient to stimulate DnaK ATPase activity. Zinc center 1 plays an important role in the autonomous, DnaK-independent chaperone activity of DnaJ. Zinc center 2 is essential for interaction with DnaK and for DnaJ activity.</text>
</comment>
<comment type="similarity">
    <text evidence="1">Belongs to the DnaJ family.</text>
</comment>
<comment type="sequence caution" evidence="2">
    <conflict type="erroneous initiation">
        <sequence resource="EMBL-CDS" id="AAV27396"/>
    </conflict>
</comment>
<keyword id="KW-0143">Chaperone</keyword>
<keyword id="KW-0963">Cytoplasm</keyword>
<keyword id="KW-0235">DNA replication</keyword>
<keyword id="KW-0479">Metal-binding</keyword>
<keyword id="KW-0677">Repeat</keyword>
<keyword id="KW-0346">Stress response</keyword>
<keyword id="KW-0862">Zinc</keyword>
<keyword id="KW-0863">Zinc-finger</keyword>
<gene>
    <name evidence="1" type="primary">dnaJ</name>
    <name type="ordered locus">mhp073</name>
</gene>
<dbReference type="EMBL" id="AE017332">
    <property type="protein sequence ID" value="AAV27396.1"/>
    <property type="status" value="ALT_INIT"/>
    <property type="molecule type" value="Genomic_DNA"/>
</dbReference>
<dbReference type="SMR" id="Q601X8"/>
<dbReference type="KEGG" id="mhy:mhp073"/>
<dbReference type="eggNOG" id="COG0484">
    <property type="taxonomic scope" value="Bacteria"/>
</dbReference>
<dbReference type="HOGENOM" id="CLU_1376826_0_0_14"/>
<dbReference type="PhylomeDB" id="Q601X8"/>
<dbReference type="Proteomes" id="UP000006822">
    <property type="component" value="Chromosome"/>
</dbReference>
<dbReference type="GO" id="GO:0005737">
    <property type="term" value="C:cytoplasm"/>
    <property type="evidence" value="ECO:0007669"/>
    <property type="project" value="UniProtKB-SubCell"/>
</dbReference>
<dbReference type="GO" id="GO:0005524">
    <property type="term" value="F:ATP binding"/>
    <property type="evidence" value="ECO:0007669"/>
    <property type="project" value="InterPro"/>
</dbReference>
<dbReference type="GO" id="GO:0031072">
    <property type="term" value="F:heat shock protein binding"/>
    <property type="evidence" value="ECO:0007669"/>
    <property type="project" value="InterPro"/>
</dbReference>
<dbReference type="GO" id="GO:0051082">
    <property type="term" value="F:unfolded protein binding"/>
    <property type="evidence" value="ECO:0007669"/>
    <property type="project" value="UniProtKB-UniRule"/>
</dbReference>
<dbReference type="GO" id="GO:0008270">
    <property type="term" value="F:zinc ion binding"/>
    <property type="evidence" value="ECO:0007669"/>
    <property type="project" value="UniProtKB-UniRule"/>
</dbReference>
<dbReference type="GO" id="GO:0051085">
    <property type="term" value="P:chaperone cofactor-dependent protein refolding"/>
    <property type="evidence" value="ECO:0007669"/>
    <property type="project" value="TreeGrafter"/>
</dbReference>
<dbReference type="GO" id="GO:0006260">
    <property type="term" value="P:DNA replication"/>
    <property type="evidence" value="ECO:0007669"/>
    <property type="project" value="UniProtKB-KW"/>
</dbReference>
<dbReference type="GO" id="GO:0042026">
    <property type="term" value="P:protein refolding"/>
    <property type="evidence" value="ECO:0007669"/>
    <property type="project" value="TreeGrafter"/>
</dbReference>
<dbReference type="GO" id="GO:0009408">
    <property type="term" value="P:response to heat"/>
    <property type="evidence" value="ECO:0007669"/>
    <property type="project" value="InterPro"/>
</dbReference>
<dbReference type="CDD" id="cd06257">
    <property type="entry name" value="DnaJ"/>
    <property type="match status" value="1"/>
</dbReference>
<dbReference type="CDD" id="cd10747">
    <property type="entry name" value="DnaJ_C"/>
    <property type="match status" value="1"/>
</dbReference>
<dbReference type="CDD" id="cd10719">
    <property type="entry name" value="DnaJ_zf"/>
    <property type="match status" value="1"/>
</dbReference>
<dbReference type="FunFam" id="2.10.230.10:FF:000002">
    <property type="entry name" value="Molecular chaperone DnaJ"/>
    <property type="match status" value="1"/>
</dbReference>
<dbReference type="Gene3D" id="1.10.287.110">
    <property type="entry name" value="DnaJ domain"/>
    <property type="match status" value="1"/>
</dbReference>
<dbReference type="Gene3D" id="2.10.230.10">
    <property type="entry name" value="Heat shock protein DnaJ, cysteine-rich domain"/>
    <property type="match status" value="1"/>
</dbReference>
<dbReference type="Gene3D" id="2.60.260.20">
    <property type="entry name" value="Urease metallochaperone UreE, N-terminal domain"/>
    <property type="match status" value="2"/>
</dbReference>
<dbReference type="HAMAP" id="MF_01152">
    <property type="entry name" value="DnaJ"/>
    <property type="match status" value="1"/>
</dbReference>
<dbReference type="InterPro" id="IPR012724">
    <property type="entry name" value="DnaJ"/>
</dbReference>
<dbReference type="InterPro" id="IPR002939">
    <property type="entry name" value="DnaJ_C"/>
</dbReference>
<dbReference type="InterPro" id="IPR001623">
    <property type="entry name" value="DnaJ_domain"/>
</dbReference>
<dbReference type="InterPro" id="IPR018253">
    <property type="entry name" value="DnaJ_domain_CS"/>
</dbReference>
<dbReference type="InterPro" id="IPR008971">
    <property type="entry name" value="HSP40/DnaJ_pept-bd"/>
</dbReference>
<dbReference type="InterPro" id="IPR001305">
    <property type="entry name" value="HSP_DnaJ_Cys-rich_dom"/>
</dbReference>
<dbReference type="InterPro" id="IPR036410">
    <property type="entry name" value="HSP_DnaJ_Cys-rich_dom_sf"/>
</dbReference>
<dbReference type="InterPro" id="IPR036869">
    <property type="entry name" value="J_dom_sf"/>
</dbReference>
<dbReference type="PANTHER" id="PTHR43096">
    <property type="entry name" value="DNAJ HOMOLOG 1, MITOCHONDRIAL-RELATED"/>
    <property type="match status" value="1"/>
</dbReference>
<dbReference type="PANTHER" id="PTHR43096:SF52">
    <property type="entry name" value="DNAJ HOMOLOG 1, MITOCHONDRIAL-RELATED"/>
    <property type="match status" value="1"/>
</dbReference>
<dbReference type="Pfam" id="PF00226">
    <property type="entry name" value="DnaJ"/>
    <property type="match status" value="1"/>
</dbReference>
<dbReference type="Pfam" id="PF01556">
    <property type="entry name" value="DnaJ_C"/>
    <property type="match status" value="1"/>
</dbReference>
<dbReference type="Pfam" id="PF00684">
    <property type="entry name" value="DnaJ_CXXCXGXG"/>
    <property type="match status" value="1"/>
</dbReference>
<dbReference type="PRINTS" id="PR00625">
    <property type="entry name" value="JDOMAIN"/>
</dbReference>
<dbReference type="SMART" id="SM00271">
    <property type="entry name" value="DnaJ"/>
    <property type="match status" value="1"/>
</dbReference>
<dbReference type="SUPFAM" id="SSF46565">
    <property type="entry name" value="Chaperone J-domain"/>
    <property type="match status" value="1"/>
</dbReference>
<dbReference type="SUPFAM" id="SSF57938">
    <property type="entry name" value="DnaJ/Hsp40 cysteine-rich domain"/>
    <property type="match status" value="1"/>
</dbReference>
<dbReference type="SUPFAM" id="SSF49493">
    <property type="entry name" value="HSP40/DnaJ peptide-binding domain"/>
    <property type="match status" value="2"/>
</dbReference>
<dbReference type="PROSITE" id="PS00636">
    <property type="entry name" value="DNAJ_1"/>
    <property type="match status" value="1"/>
</dbReference>
<dbReference type="PROSITE" id="PS50076">
    <property type="entry name" value="DNAJ_2"/>
    <property type="match status" value="1"/>
</dbReference>
<dbReference type="PROSITE" id="PS51188">
    <property type="entry name" value="ZF_CR"/>
    <property type="match status" value="1"/>
</dbReference>
<organism>
    <name type="scientific">Mesomycoplasma hyopneumoniae (strain 232)</name>
    <name type="common">Mycoplasma hyopneumoniae</name>
    <dbReference type="NCBI Taxonomy" id="295358"/>
    <lineage>
        <taxon>Bacteria</taxon>
        <taxon>Bacillati</taxon>
        <taxon>Mycoplasmatota</taxon>
        <taxon>Mycoplasmoidales</taxon>
        <taxon>Metamycoplasmataceae</taxon>
        <taxon>Mesomycoplasma</taxon>
    </lineage>
</organism>
<evidence type="ECO:0000255" key="1">
    <source>
        <dbReference type="HAMAP-Rule" id="MF_01152"/>
    </source>
</evidence>
<evidence type="ECO:0000305" key="2"/>